<sequence>MQMKRTAFFISDGTGITAETLGQSLLAQFENISFVKLTRPYIDTEEKARAMVQQINNAAESDGARPIIFDTIVNRDIRAVLAQSNGFMIDIFATFLSPLEQELSADSSYSVGKSHSIGHNSNYMDRIEAVNFALDNDDGARTHYYDKADLILVGVSRCGKTPTCLYMALQYGIRAANYPLTEEDMERLQLPNALKQYKHKLFGLTIDPDRLTAIRNERKPNSRYASFAQCEFEVREVESLFRRENIAYINSTHFSVEEISAKILVEKGVERRFK</sequence>
<organism>
    <name type="scientific">Pseudomonas aeruginosa (strain UCBPP-PA14)</name>
    <dbReference type="NCBI Taxonomy" id="208963"/>
    <lineage>
        <taxon>Bacteria</taxon>
        <taxon>Pseudomonadati</taxon>
        <taxon>Pseudomonadota</taxon>
        <taxon>Gammaproteobacteria</taxon>
        <taxon>Pseudomonadales</taxon>
        <taxon>Pseudomonadaceae</taxon>
        <taxon>Pseudomonas</taxon>
    </lineage>
</organism>
<proteinExistence type="inferred from homology"/>
<feature type="chain" id="PRO_0000316715" description="Putative phosphoenolpyruvate synthase regulatory protein">
    <location>
        <begin position="1"/>
        <end position="274"/>
    </location>
</feature>
<feature type="binding site" evidence="1">
    <location>
        <begin position="154"/>
        <end position="161"/>
    </location>
    <ligand>
        <name>ADP</name>
        <dbReference type="ChEBI" id="CHEBI:456216"/>
    </ligand>
</feature>
<protein>
    <recommendedName>
        <fullName evidence="1">Putative phosphoenolpyruvate synthase regulatory protein</fullName>
        <shortName evidence="1">PEP synthase regulatory protein</shortName>
        <shortName evidence="1">PSRP</shortName>
        <ecNumber evidence="1">2.7.11.33</ecNumber>
        <ecNumber evidence="1">2.7.4.28</ecNumber>
    </recommendedName>
    <alternativeName>
        <fullName evidence="1">Pyruvate, water dikinase regulatory protein</fullName>
    </alternativeName>
</protein>
<evidence type="ECO:0000255" key="1">
    <source>
        <dbReference type="HAMAP-Rule" id="MF_01062"/>
    </source>
</evidence>
<dbReference type="EC" id="2.7.11.33" evidence="1"/>
<dbReference type="EC" id="2.7.4.28" evidence="1"/>
<dbReference type="EMBL" id="CP000438">
    <property type="protein sequence ID" value="ABJ10955.1"/>
    <property type="molecule type" value="Genomic_DNA"/>
</dbReference>
<dbReference type="SMR" id="Q02KR0"/>
<dbReference type="KEGG" id="pau:PA14_41680"/>
<dbReference type="PseudoCAP" id="PA14_41680"/>
<dbReference type="HOGENOM" id="CLU_046206_1_0_6"/>
<dbReference type="Proteomes" id="UP000000653">
    <property type="component" value="Chromosome"/>
</dbReference>
<dbReference type="GO" id="GO:0043531">
    <property type="term" value="F:ADP binding"/>
    <property type="evidence" value="ECO:0007669"/>
    <property type="project" value="UniProtKB-UniRule"/>
</dbReference>
<dbReference type="GO" id="GO:0005524">
    <property type="term" value="F:ATP binding"/>
    <property type="evidence" value="ECO:0007669"/>
    <property type="project" value="InterPro"/>
</dbReference>
<dbReference type="GO" id="GO:0016776">
    <property type="term" value="F:phosphotransferase activity, phosphate group as acceptor"/>
    <property type="evidence" value="ECO:0007669"/>
    <property type="project" value="UniProtKB-UniRule"/>
</dbReference>
<dbReference type="GO" id="GO:0004674">
    <property type="term" value="F:protein serine/threonine kinase activity"/>
    <property type="evidence" value="ECO:0007669"/>
    <property type="project" value="UniProtKB-UniRule"/>
</dbReference>
<dbReference type="HAMAP" id="MF_01062">
    <property type="entry name" value="PSRP"/>
    <property type="match status" value="1"/>
</dbReference>
<dbReference type="InterPro" id="IPR005177">
    <property type="entry name" value="Kinase-pyrophosphorylase"/>
</dbReference>
<dbReference type="InterPro" id="IPR026530">
    <property type="entry name" value="PSRP"/>
</dbReference>
<dbReference type="NCBIfam" id="NF003742">
    <property type="entry name" value="PRK05339.1"/>
    <property type="match status" value="1"/>
</dbReference>
<dbReference type="PANTHER" id="PTHR31756">
    <property type="entry name" value="PYRUVATE, PHOSPHATE DIKINASE REGULATORY PROTEIN 1, CHLOROPLASTIC"/>
    <property type="match status" value="1"/>
</dbReference>
<dbReference type="PANTHER" id="PTHR31756:SF3">
    <property type="entry name" value="PYRUVATE, PHOSPHATE DIKINASE REGULATORY PROTEIN 1, CHLOROPLASTIC"/>
    <property type="match status" value="1"/>
</dbReference>
<dbReference type="Pfam" id="PF03618">
    <property type="entry name" value="Kinase-PPPase"/>
    <property type="match status" value="1"/>
</dbReference>
<gene>
    <name type="ordered locus">PA14_41680</name>
</gene>
<accession>Q02KR0</accession>
<reference key="1">
    <citation type="journal article" date="2006" name="Genome Biol.">
        <title>Genomic analysis reveals that Pseudomonas aeruginosa virulence is combinatorial.</title>
        <authorList>
            <person name="Lee D.G."/>
            <person name="Urbach J.M."/>
            <person name="Wu G."/>
            <person name="Liberati N.T."/>
            <person name="Feinbaum R.L."/>
            <person name="Miyata S."/>
            <person name="Diggins L.T."/>
            <person name="He J."/>
            <person name="Saucier M."/>
            <person name="Deziel E."/>
            <person name="Friedman L."/>
            <person name="Li L."/>
            <person name="Grills G."/>
            <person name="Montgomery K."/>
            <person name="Kucherlapati R."/>
            <person name="Rahme L.G."/>
            <person name="Ausubel F.M."/>
        </authorList>
    </citation>
    <scope>NUCLEOTIDE SEQUENCE [LARGE SCALE GENOMIC DNA]</scope>
    <source>
        <strain>UCBPP-PA14</strain>
    </source>
</reference>
<keyword id="KW-0418">Kinase</keyword>
<keyword id="KW-0547">Nucleotide-binding</keyword>
<keyword id="KW-0723">Serine/threonine-protein kinase</keyword>
<keyword id="KW-0808">Transferase</keyword>
<name>PSRP_PSEAB</name>
<comment type="function">
    <text evidence="1">Bifunctional serine/threonine kinase and phosphorylase involved in the regulation of the phosphoenolpyruvate synthase (PEPS) by catalyzing its phosphorylation/dephosphorylation.</text>
</comment>
<comment type="catalytic activity">
    <reaction evidence="1">
        <text>[pyruvate, water dikinase] + ADP = [pyruvate, water dikinase]-phosphate + AMP + H(+)</text>
        <dbReference type="Rhea" id="RHEA:46020"/>
        <dbReference type="Rhea" id="RHEA-COMP:11425"/>
        <dbReference type="Rhea" id="RHEA-COMP:11426"/>
        <dbReference type="ChEBI" id="CHEBI:15378"/>
        <dbReference type="ChEBI" id="CHEBI:43176"/>
        <dbReference type="ChEBI" id="CHEBI:68546"/>
        <dbReference type="ChEBI" id="CHEBI:456215"/>
        <dbReference type="ChEBI" id="CHEBI:456216"/>
        <dbReference type="EC" id="2.7.11.33"/>
    </reaction>
</comment>
<comment type="catalytic activity">
    <reaction evidence="1">
        <text>[pyruvate, water dikinase]-phosphate + phosphate + H(+) = [pyruvate, water dikinase] + diphosphate</text>
        <dbReference type="Rhea" id="RHEA:48580"/>
        <dbReference type="Rhea" id="RHEA-COMP:11425"/>
        <dbReference type="Rhea" id="RHEA-COMP:11426"/>
        <dbReference type="ChEBI" id="CHEBI:15378"/>
        <dbReference type="ChEBI" id="CHEBI:33019"/>
        <dbReference type="ChEBI" id="CHEBI:43176"/>
        <dbReference type="ChEBI" id="CHEBI:43474"/>
        <dbReference type="ChEBI" id="CHEBI:68546"/>
        <dbReference type="EC" id="2.7.4.28"/>
    </reaction>
</comment>
<comment type="similarity">
    <text evidence="1">Belongs to the pyruvate, phosphate/water dikinase regulatory protein family. PSRP subfamily.</text>
</comment>